<name>HMH2_GIRTI</name>
<comment type="function">
    <text>This protein might be involved in determination and/or differentiation of nerve cells in the continuous replacement of neurons in the cephalic region.</text>
</comment>
<comment type="subcellular location">
    <subcellularLocation>
        <location evidence="3">Nucleus</location>
    </subcellularLocation>
</comment>
<comment type="tissue specificity">
    <text>Intestine and unidentified peripheral parenchymal cells. Slightly higher levels in the cephalic region compared to other body regions.</text>
</comment>
<comment type="similarity">
    <text evidence="3">Belongs to the NK-2 homeobox family.</text>
</comment>
<organism>
    <name type="scientific">Girardia tigrina</name>
    <name type="common">Planarian</name>
    <name type="synonym">Dugesia tigrina</name>
    <dbReference type="NCBI Taxonomy" id="6162"/>
    <lineage>
        <taxon>Eukaryota</taxon>
        <taxon>Metazoa</taxon>
        <taxon>Spiralia</taxon>
        <taxon>Lophotrochozoa</taxon>
        <taxon>Platyhelminthes</taxon>
        <taxon>Rhabditophora</taxon>
        <taxon>Seriata</taxon>
        <taxon>Tricladida</taxon>
        <taxon>Continenticola</taxon>
        <taxon>Geoplanoidea</taxon>
        <taxon>Dugesiidae</taxon>
        <taxon>Girardia</taxon>
    </lineage>
</organism>
<protein>
    <recommendedName>
        <fullName>Homeobox protein DTH-2</fullName>
    </recommendedName>
</protein>
<feature type="chain" id="PRO_0000049065" description="Homeobox protein DTH-2">
    <location>
        <begin position="1"/>
        <end position="363"/>
    </location>
</feature>
<feature type="DNA-binding region" description="Homeobox" evidence="1">
    <location>
        <begin position="133"/>
        <end position="192"/>
    </location>
</feature>
<feature type="region of interest" description="Disordered" evidence="2">
    <location>
        <begin position="189"/>
        <end position="246"/>
    </location>
</feature>
<feature type="compositionally biased region" description="Basic and acidic residues" evidence="2">
    <location>
        <begin position="191"/>
        <end position="219"/>
    </location>
</feature>
<feature type="compositionally biased region" description="Polar residues" evidence="2">
    <location>
        <begin position="220"/>
        <end position="231"/>
    </location>
</feature>
<feature type="compositionally biased region" description="Basic and acidic residues" evidence="2">
    <location>
        <begin position="232"/>
        <end position="246"/>
    </location>
</feature>
<evidence type="ECO:0000255" key="1">
    <source>
        <dbReference type="PROSITE-ProRule" id="PRU00108"/>
    </source>
</evidence>
<evidence type="ECO:0000256" key="2">
    <source>
        <dbReference type="SAM" id="MobiDB-lite"/>
    </source>
</evidence>
<evidence type="ECO:0000305" key="3"/>
<gene>
    <name type="primary">DTH-2</name>
</gene>
<accession>Q00401</accession>
<keyword id="KW-0217">Developmental protein</keyword>
<keyword id="KW-0238">DNA-binding</keyword>
<keyword id="KW-0371">Homeobox</keyword>
<keyword id="KW-0539">Nucleus</keyword>
<sequence>MSGIPGLAGMSSMSPYSAYAALTQHTGVSSGSSPFGSQYCSSVNDFNPYSDPRGSNTWYGMAASANASNDPRMTMSRLMGSAAAAASSSMSAYSGIPTNFHQGMHSAMGMASLGAATYDHQKAAMQFNNMSQRRKRRILFSQAQIYELERRFKQQKYLSAPEREHLANLINLTPTQVKIWFQNHRYKCKRSQKDKEKEQQKEKSYHLKKNIVDDKERSPNKQICNASSSDRSTPEEPVAKAKESGLDFSNHKIDNLNLKMEADLEPKSSLYSIIPPYLTNSYAQQTQSEAQTSPIINNVLGSNLFPERKSTPTMGPLTSYSFGQSMDSISSFYSPDFSLYNCAHPYMAASSSYFMNAASRPWN</sequence>
<dbReference type="EMBL" id="X56500">
    <property type="protein sequence ID" value="CAA39855.1"/>
    <property type="molecule type" value="mRNA"/>
</dbReference>
<dbReference type="EMBL" id="X69202">
    <property type="protein sequence ID" value="CAA49140.1"/>
    <property type="molecule type" value="Genomic_DNA"/>
</dbReference>
<dbReference type="PIR" id="S33702">
    <property type="entry name" value="S33702"/>
</dbReference>
<dbReference type="SMR" id="Q00401"/>
<dbReference type="GO" id="GO:0005634">
    <property type="term" value="C:nucleus"/>
    <property type="evidence" value="ECO:0007669"/>
    <property type="project" value="UniProtKB-SubCell"/>
</dbReference>
<dbReference type="GO" id="GO:0000981">
    <property type="term" value="F:DNA-binding transcription factor activity, RNA polymerase II-specific"/>
    <property type="evidence" value="ECO:0007669"/>
    <property type="project" value="InterPro"/>
</dbReference>
<dbReference type="GO" id="GO:0000978">
    <property type="term" value="F:RNA polymerase II cis-regulatory region sequence-specific DNA binding"/>
    <property type="evidence" value="ECO:0007669"/>
    <property type="project" value="TreeGrafter"/>
</dbReference>
<dbReference type="GO" id="GO:0030154">
    <property type="term" value="P:cell differentiation"/>
    <property type="evidence" value="ECO:0007669"/>
    <property type="project" value="TreeGrafter"/>
</dbReference>
<dbReference type="CDD" id="cd00086">
    <property type="entry name" value="homeodomain"/>
    <property type="match status" value="1"/>
</dbReference>
<dbReference type="FunFam" id="1.10.10.60:FF:000706">
    <property type="entry name" value="NK2b"/>
    <property type="match status" value="1"/>
</dbReference>
<dbReference type="Gene3D" id="1.10.10.60">
    <property type="entry name" value="Homeodomain-like"/>
    <property type="match status" value="1"/>
</dbReference>
<dbReference type="InterPro" id="IPR001356">
    <property type="entry name" value="HD"/>
</dbReference>
<dbReference type="InterPro" id="IPR020479">
    <property type="entry name" value="HD_metazoa"/>
</dbReference>
<dbReference type="InterPro" id="IPR017970">
    <property type="entry name" value="Homeobox_CS"/>
</dbReference>
<dbReference type="InterPro" id="IPR050394">
    <property type="entry name" value="Homeobox_NK-like"/>
</dbReference>
<dbReference type="InterPro" id="IPR009057">
    <property type="entry name" value="Homeodomain-like_sf"/>
</dbReference>
<dbReference type="PANTHER" id="PTHR24340">
    <property type="entry name" value="HOMEOBOX PROTEIN NKX"/>
    <property type="match status" value="1"/>
</dbReference>
<dbReference type="PANTHER" id="PTHR24340:SF41">
    <property type="entry name" value="MUSCLE-SPECIFIC HOMEOBOX PROTEIN TINMAN-RELATED"/>
    <property type="match status" value="1"/>
</dbReference>
<dbReference type="Pfam" id="PF00046">
    <property type="entry name" value="Homeodomain"/>
    <property type="match status" value="1"/>
</dbReference>
<dbReference type="PRINTS" id="PR00024">
    <property type="entry name" value="HOMEOBOX"/>
</dbReference>
<dbReference type="SMART" id="SM00389">
    <property type="entry name" value="HOX"/>
    <property type="match status" value="1"/>
</dbReference>
<dbReference type="SUPFAM" id="SSF46689">
    <property type="entry name" value="Homeodomain-like"/>
    <property type="match status" value="1"/>
</dbReference>
<dbReference type="PROSITE" id="PS00027">
    <property type="entry name" value="HOMEOBOX_1"/>
    <property type="match status" value="1"/>
</dbReference>
<dbReference type="PROSITE" id="PS50071">
    <property type="entry name" value="HOMEOBOX_2"/>
    <property type="match status" value="1"/>
</dbReference>
<reference key="1">
    <citation type="journal article" date="1991" name="Proc. Natl. Acad. Sci. U.S.A.">
        <title>Planarian homeobox genes: cloning, sequence analysis, and expression.</title>
        <authorList>
            <person name="Salo E."/>
            <person name="Garcia-Fernandez J."/>
            <person name="Baguna J."/>
        </authorList>
    </citation>
    <scope>NUCLEOTIDE SEQUENCE [MRNA]</scope>
</reference>
<reference key="2">
    <citation type="journal article" date="1993" name="Development">
        <title>Genomic organization and expression of the planarian homeobox genes Dth-1 and Dth-2.</title>
        <authorList>
            <person name="Garcia-Fernandez J."/>
            <person name="Baguna J."/>
            <person name="Salo E."/>
        </authorList>
    </citation>
    <scope>NUCLEOTIDE SEQUENCE [GENOMIC DNA]</scope>
</reference>
<proteinExistence type="evidence at transcript level"/>